<reference key="1">
    <citation type="journal article" date="2004" name="Proc. Natl. Acad. Sci. U.S.A.">
        <title>Structural flexibility in the Burkholderia mallei genome.</title>
        <authorList>
            <person name="Nierman W.C."/>
            <person name="DeShazer D."/>
            <person name="Kim H.S."/>
            <person name="Tettelin H."/>
            <person name="Nelson K.E."/>
            <person name="Feldblyum T.V."/>
            <person name="Ulrich R.L."/>
            <person name="Ronning C.M."/>
            <person name="Brinkac L.M."/>
            <person name="Daugherty S.C."/>
            <person name="Davidsen T.D."/>
            <person name="DeBoy R.T."/>
            <person name="Dimitrov G."/>
            <person name="Dodson R.J."/>
            <person name="Durkin A.S."/>
            <person name="Gwinn M.L."/>
            <person name="Haft D.H."/>
            <person name="Khouri H.M."/>
            <person name="Kolonay J.F."/>
            <person name="Madupu R."/>
            <person name="Mohammoud Y."/>
            <person name="Nelson W.C."/>
            <person name="Radune D."/>
            <person name="Romero C.M."/>
            <person name="Sarria S."/>
            <person name="Selengut J."/>
            <person name="Shamblin C."/>
            <person name="Sullivan S.A."/>
            <person name="White O."/>
            <person name="Yu Y."/>
            <person name="Zafar N."/>
            <person name="Zhou L."/>
            <person name="Fraser C.M."/>
        </authorList>
    </citation>
    <scope>NUCLEOTIDE SEQUENCE [LARGE SCALE GENOMIC DNA]</scope>
    <source>
        <strain>ATCC 23344</strain>
    </source>
</reference>
<organism>
    <name type="scientific">Burkholderia mallei (strain ATCC 23344)</name>
    <dbReference type="NCBI Taxonomy" id="243160"/>
    <lineage>
        <taxon>Bacteria</taxon>
        <taxon>Pseudomonadati</taxon>
        <taxon>Pseudomonadota</taxon>
        <taxon>Betaproteobacteria</taxon>
        <taxon>Burkholderiales</taxon>
        <taxon>Burkholderiaceae</taxon>
        <taxon>Burkholderia</taxon>
        <taxon>pseudomallei group</taxon>
    </lineage>
</organism>
<gene>
    <name evidence="1" type="primary">rsmH</name>
    <name type="synonym">mraW</name>
    <name type="ordered locus">BMA2559</name>
</gene>
<accession>Q62GR9</accession>
<protein>
    <recommendedName>
        <fullName evidence="1">Ribosomal RNA small subunit methyltransferase H</fullName>
        <ecNumber evidence="1">2.1.1.199</ecNumber>
    </recommendedName>
    <alternativeName>
        <fullName evidence="1">16S rRNA m(4)C1402 methyltransferase</fullName>
    </alternativeName>
    <alternativeName>
        <fullName evidence="1">rRNA (cytosine-N(4)-)-methyltransferase RsmH</fullName>
    </alternativeName>
</protein>
<dbReference type="EC" id="2.1.1.199" evidence="1"/>
<dbReference type="EMBL" id="CP000010">
    <property type="protein sequence ID" value="AAU50033.1"/>
    <property type="molecule type" value="Genomic_DNA"/>
</dbReference>
<dbReference type="RefSeq" id="WP_004194427.1">
    <property type="nucleotide sequence ID" value="NC_006348.1"/>
</dbReference>
<dbReference type="RefSeq" id="YP_104102.1">
    <property type="nucleotide sequence ID" value="NC_006348.1"/>
</dbReference>
<dbReference type="SMR" id="Q62GR9"/>
<dbReference type="GeneID" id="93061635"/>
<dbReference type="KEGG" id="bma:BMA2559"/>
<dbReference type="PATRIC" id="fig|243160.12.peg.2636"/>
<dbReference type="eggNOG" id="COG0275">
    <property type="taxonomic scope" value="Bacteria"/>
</dbReference>
<dbReference type="HOGENOM" id="CLU_038422_2_0_4"/>
<dbReference type="Proteomes" id="UP000006693">
    <property type="component" value="Chromosome 1"/>
</dbReference>
<dbReference type="GO" id="GO:0005737">
    <property type="term" value="C:cytoplasm"/>
    <property type="evidence" value="ECO:0007669"/>
    <property type="project" value="UniProtKB-SubCell"/>
</dbReference>
<dbReference type="GO" id="GO:0071424">
    <property type="term" value="F:rRNA (cytosine-N4-)-methyltransferase activity"/>
    <property type="evidence" value="ECO:0007669"/>
    <property type="project" value="UniProtKB-UniRule"/>
</dbReference>
<dbReference type="GO" id="GO:0070475">
    <property type="term" value="P:rRNA base methylation"/>
    <property type="evidence" value="ECO:0007669"/>
    <property type="project" value="UniProtKB-UniRule"/>
</dbReference>
<dbReference type="Gene3D" id="1.10.150.170">
    <property type="entry name" value="Putative methyltransferase TM0872, insert domain"/>
    <property type="match status" value="1"/>
</dbReference>
<dbReference type="Gene3D" id="3.40.50.150">
    <property type="entry name" value="Vaccinia Virus protein VP39"/>
    <property type="match status" value="1"/>
</dbReference>
<dbReference type="HAMAP" id="MF_01007">
    <property type="entry name" value="16SrRNA_methyltr_H"/>
    <property type="match status" value="1"/>
</dbReference>
<dbReference type="InterPro" id="IPR002903">
    <property type="entry name" value="RsmH"/>
</dbReference>
<dbReference type="InterPro" id="IPR023397">
    <property type="entry name" value="SAM-dep_MeTrfase_MraW_recog"/>
</dbReference>
<dbReference type="InterPro" id="IPR029063">
    <property type="entry name" value="SAM-dependent_MTases_sf"/>
</dbReference>
<dbReference type="NCBIfam" id="TIGR00006">
    <property type="entry name" value="16S rRNA (cytosine(1402)-N(4))-methyltransferase RsmH"/>
    <property type="match status" value="1"/>
</dbReference>
<dbReference type="PANTHER" id="PTHR11265:SF0">
    <property type="entry name" value="12S RRNA N4-METHYLCYTIDINE METHYLTRANSFERASE"/>
    <property type="match status" value="1"/>
</dbReference>
<dbReference type="PANTHER" id="PTHR11265">
    <property type="entry name" value="S-ADENOSYL-METHYLTRANSFERASE MRAW"/>
    <property type="match status" value="1"/>
</dbReference>
<dbReference type="Pfam" id="PF01795">
    <property type="entry name" value="Methyltransf_5"/>
    <property type="match status" value="1"/>
</dbReference>
<dbReference type="PIRSF" id="PIRSF004486">
    <property type="entry name" value="MraW"/>
    <property type="match status" value="1"/>
</dbReference>
<dbReference type="SUPFAM" id="SSF81799">
    <property type="entry name" value="Putative methyltransferase TM0872, insert domain"/>
    <property type="match status" value="1"/>
</dbReference>
<dbReference type="SUPFAM" id="SSF53335">
    <property type="entry name" value="S-adenosyl-L-methionine-dependent methyltransferases"/>
    <property type="match status" value="1"/>
</dbReference>
<comment type="function">
    <text evidence="1">Specifically methylates the N4 position of cytidine in position 1402 (C1402) of 16S rRNA.</text>
</comment>
<comment type="catalytic activity">
    <reaction evidence="1">
        <text>cytidine(1402) in 16S rRNA + S-adenosyl-L-methionine = N(4)-methylcytidine(1402) in 16S rRNA + S-adenosyl-L-homocysteine + H(+)</text>
        <dbReference type="Rhea" id="RHEA:42928"/>
        <dbReference type="Rhea" id="RHEA-COMP:10286"/>
        <dbReference type="Rhea" id="RHEA-COMP:10287"/>
        <dbReference type="ChEBI" id="CHEBI:15378"/>
        <dbReference type="ChEBI" id="CHEBI:57856"/>
        <dbReference type="ChEBI" id="CHEBI:59789"/>
        <dbReference type="ChEBI" id="CHEBI:74506"/>
        <dbReference type="ChEBI" id="CHEBI:82748"/>
        <dbReference type="EC" id="2.1.1.199"/>
    </reaction>
</comment>
<comment type="subcellular location">
    <subcellularLocation>
        <location evidence="1">Cytoplasm</location>
    </subcellularLocation>
</comment>
<comment type="similarity">
    <text evidence="1">Belongs to the methyltransferase superfamily. RsmH family.</text>
</comment>
<sequence>MGNEFQHRTVLLDEAVDALVTRPDGVYVDGTFGRGGHSRAVLARLGDAGRLIAFDKDPRAIETAESIEDARFEIVHDSFAAMKGALDARGVGRVSGVLLDLGVSSPQVDDPARGFSFRANGPLDMRMDPTRGESAAEWLARASVQELTEVIRDYGEERFAFQIAKAIVARRAESDRLGPLDSTGELAQIVGHVVKTREKGKDPATRTFQAIRIHVNQELADLQVVLEAALSLLEQGGRLVVISFHSLEDRIVKRFLQAHASAPAVDRRLPIRAADLPRPPLKLLGRMFPNDAEVAANPRARSAVMRIAERVAP</sequence>
<proteinExistence type="inferred from homology"/>
<keyword id="KW-0963">Cytoplasm</keyword>
<keyword id="KW-0489">Methyltransferase</keyword>
<keyword id="KW-1185">Reference proteome</keyword>
<keyword id="KW-0698">rRNA processing</keyword>
<keyword id="KW-0949">S-adenosyl-L-methionine</keyword>
<keyword id="KW-0808">Transferase</keyword>
<evidence type="ECO:0000255" key="1">
    <source>
        <dbReference type="HAMAP-Rule" id="MF_01007"/>
    </source>
</evidence>
<feature type="chain" id="PRO_0000108596" description="Ribosomal RNA small subunit methyltransferase H">
    <location>
        <begin position="1"/>
        <end position="313"/>
    </location>
</feature>
<feature type="binding site" evidence="1">
    <location>
        <begin position="35"/>
        <end position="37"/>
    </location>
    <ligand>
        <name>S-adenosyl-L-methionine</name>
        <dbReference type="ChEBI" id="CHEBI:59789"/>
    </ligand>
</feature>
<feature type="binding site" evidence="1">
    <location>
        <position position="55"/>
    </location>
    <ligand>
        <name>S-adenosyl-L-methionine</name>
        <dbReference type="ChEBI" id="CHEBI:59789"/>
    </ligand>
</feature>
<feature type="binding site" evidence="1">
    <location>
        <position position="79"/>
    </location>
    <ligand>
        <name>S-adenosyl-L-methionine</name>
        <dbReference type="ChEBI" id="CHEBI:59789"/>
    </ligand>
</feature>
<feature type="binding site" evidence="1">
    <location>
        <position position="100"/>
    </location>
    <ligand>
        <name>S-adenosyl-L-methionine</name>
        <dbReference type="ChEBI" id="CHEBI:59789"/>
    </ligand>
</feature>
<feature type="binding site" evidence="1">
    <location>
        <position position="107"/>
    </location>
    <ligand>
        <name>S-adenosyl-L-methionine</name>
        <dbReference type="ChEBI" id="CHEBI:59789"/>
    </ligand>
</feature>
<name>RSMH_BURMA</name>